<feature type="signal peptide" evidence="1">
    <location>
        <begin position="1"/>
        <end position="20"/>
    </location>
</feature>
<feature type="chain" id="PRO_0000029321" description="Foldase protein PrsA">
    <location>
        <begin position="21"/>
        <end position="320"/>
    </location>
</feature>
<feature type="domain" description="PpiC" evidence="1">
    <location>
        <begin position="139"/>
        <end position="245"/>
    </location>
</feature>
<feature type="region of interest" description="Disordered" evidence="2">
    <location>
        <begin position="159"/>
        <end position="198"/>
    </location>
</feature>
<feature type="lipid moiety-binding region" description="N-palmitoyl cysteine" evidence="1">
    <location>
        <position position="21"/>
    </location>
</feature>
<feature type="lipid moiety-binding region" description="S-diacylglycerol cysteine" evidence="1">
    <location>
        <position position="21"/>
    </location>
</feature>
<reference key="1">
    <citation type="journal article" date="2004" name="Proc. Natl. Acad. Sci. U.S.A.">
        <title>Complete genomes of two clinical Staphylococcus aureus strains: evidence for the rapid evolution of virulence and drug resistance.</title>
        <authorList>
            <person name="Holden M.T.G."/>
            <person name="Feil E.J."/>
            <person name="Lindsay J.A."/>
            <person name="Peacock S.J."/>
            <person name="Day N.P.J."/>
            <person name="Enright M.C."/>
            <person name="Foster T.J."/>
            <person name="Moore C.E."/>
            <person name="Hurst L."/>
            <person name="Atkin R."/>
            <person name="Barron A."/>
            <person name="Bason N."/>
            <person name="Bentley S.D."/>
            <person name="Chillingworth C."/>
            <person name="Chillingworth T."/>
            <person name="Churcher C."/>
            <person name="Clark L."/>
            <person name="Corton C."/>
            <person name="Cronin A."/>
            <person name="Doggett J."/>
            <person name="Dowd L."/>
            <person name="Feltwell T."/>
            <person name="Hance Z."/>
            <person name="Harris B."/>
            <person name="Hauser H."/>
            <person name="Holroyd S."/>
            <person name="Jagels K."/>
            <person name="James K.D."/>
            <person name="Lennard N."/>
            <person name="Line A."/>
            <person name="Mayes R."/>
            <person name="Moule S."/>
            <person name="Mungall K."/>
            <person name="Ormond D."/>
            <person name="Quail M.A."/>
            <person name="Rabbinowitsch E."/>
            <person name="Rutherford K.M."/>
            <person name="Sanders M."/>
            <person name="Sharp S."/>
            <person name="Simmonds M."/>
            <person name="Stevens K."/>
            <person name="Whitehead S."/>
            <person name="Barrell B.G."/>
            <person name="Spratt B.G."/>
            <person name="Parkhill J."/>
        </authorList>
    </citation>
    <scope>NUCLEOTIDE SEQUENCE [LARGE SCALE GENOMIC DNA]</scope>
    <source>
        <strain>MSSA476</strain>
    </source>
</reference>
<comment type="function">
    <text evidence="1">Plays a major role in protein secretion by helping the post-translocational extracellular folding of several secreted proteins.</text>
</comment>
<comment type="catalytic activity">
    <reaction evidence="1">
        <text>[protein]-peptidylproline (omega=180) = [protein]-peptidylproline (omega=0)</text>
        <dbReference type="Rhea" id="RHEA:16237"/>
        <dbReference type="Rhea" id="RHEA-COMP:10747"/>
        <dbReference type="Rhea" id="RHEA-COMP:10748"/>
        <dbReference type="ChEBI" id="CHEBI:83833"/>
        <dbReference type="ChEBI" id="CHEBI:83834"/>
        <dbReference type="EC" id="5.2.1.8"/>
    </reaction>
</comment>
<comment type="subcellular location">
    <subcellularLocation>
        <location evidence="1">Cell membrane</location>
        <topology evidence="1">Lipid-anchor</topology>
    </subcellularLocation>
</comment>
<comment type="similarity">
    <text evidence="1">Belongs to the PrsA family.</text>
</comment>
<evidence type="ECO:0000255" key="1">
    <source>
        <dbReference type="HAMAP-Rule" id="MF_01145"/>
    </source>
</evidence>
<evidence type="ECO:0000256" key="2">
    <source>
        <dbReference type="SAM" id="MobiDB-lite"/>
    </source>
</evidence>
<dbReference type="EC" id="5.2.1.8" evidence="1"/>
<dbReference type="EMBL" id="BX571857">
    <property type="protein sequence ID" value="CAG43567.1"/>
    <property type="molecule type" value="Genomic_DNA"/>
</dbReference>
<dbReference type="RefSeq" id="WP_000782121.1">
    <property type="nucleotide sequence ID" value="NC_002953.3"/>
</dbReference>
<dbReference type="SMR" id="Q6G894"/>
<dbReference type="KEGG" id="sas:SAS1762"/>
<dbReference type="HOGENOM" id="CLU_034646_6_2_9"/>
<dbReference type="GO" id="GO:0005886">
    <property type="term" value="C:plasma membrane"/>
    <property type="evidence" value="ECO:0007669"/>
    <property type="project" value="UniProtKB-SubCell"/>
</dbReference>
<dbReference type="GO" id="GO:0003755">
    <property type="term" value="F:peptidyl-prolyl cis-trans isomerase activity"/>
    <property type="evidence" value="ECO:0007669"/>
    <property type="project" value="UniProtKB-UniRule"/>
</dbReference>
<dbReference type="GO" id="GO:0006457">
    <property type="term" value="P:protein folding"/>
    <property type="evidence" value="ECO:0007669"/>
    <property type="project" value="UniProtKB-UniRule"/>
</dbReference>
<dbReference type="Gene3D" id="3.10.50.40">
    <property type="match status" value="1"/>
</dbReference>
<dbReference type="Gene3D" id="1.10.4030.10">
    <property type="entry name" value="Porin chaperone SurA, peptide-binding domain"/>
    <property type="match status" value="1"/>
</dbReference>
<dbReference type="HAMAP" id="MF_01145">
    <property type="entry name" value="Foldase_PrsA"/>
    <property type="match status" value="1"/>
</dbReference>
<dbReference type="InterPro" id="IPR023059">
    <property type="entry name" value="Foldase_PrsA"/>
</dbReference>
<dbReference type="InterPro" id="IPR046357">
    <property type="entry name" value="PPIase_dom_sf"/>
</dbReference>
<dbReference type="InterPro" id="IPR000297">
    <property type="entry name" value="PPIase_PpiC"/>
</dbReference>
<dbReference type="InterPro" id="IPR050245">
    <property type="entry name" value="PrsA_foldase"/>
</dbReference>
<dbReference type="InterPro" id="IPR027304">
    <property type="entry name" value="Trigger_fact/SurA_dom_sf"/>
</dbReference>
<dbReference type="PANTHER" id="PTHR47245:SF1">
    <property type="entry name" value="FOLDASE PROTEIN PRSA"/>
    <property type="match status" value="1"/>
</dbReference>
<dbReference type="PANTHER" id="PTHR47245">
    <property type="entry name" value="PEPTIDYLPROLYL ISOMERASE"/>
    <property type="match status" value="1"/>
</dbReference>
<dbReference type="Pfam" id="PF00639">
    <property type="entry name" value="Rotamase"/>
    <property type="match status" value="1"/>
</dbReference>
<dbReference type="SUPFAM" id="SSF54534">
    <property type="entry name" value="FKBP-like"/>
    <property type="match status" value="1"/>
</dbReference>
<dbReference type="SUPFAM" id="SSF109998">
    <property type="entry name" value="Triger factor/SurA peptide-binding domain-like"/>
    <property type="match status" value="1"/>
</dbReference>
<dbReference type="PROSITE" id="PS50198">
    <property type="entry name" value="PPIC_PPIASE_2"/>
    <property type="match status" value="1"/>
</dbReference>
<dbReference type="PROSITE" id="PS51257">
    <property type="entry name" value="PROKAR_LIPOPROTEIN"/>
    <property type="match status" value="1"/>
</dbReference>
<sequence length="320" mass="35638">MKMINKLIVPVTASALLLGACGASATDSKENTLISSKAGDVTVADTMKKIGKDQIANASFTEMLNKILADKYKNKVNDKKIDEQIEKMQKQYGGKDKFEKALQQQGLTADKYKENLRTAAYHKELLSDKIKISDSEIKEDSKKASHILIKVKSKKSDKEGLDDKEAKQKAEEIQKEVSKDPSKFGEIAKKESMDTGSAKKDGELGYVLKGQTDKDFEKALFKLKDGEVSEVVKSSFGYHIIKADKPTDFNSEKQSLKEKLVDQKVQKNPKLLTDAYKDLLKEYDVDFKDRDIKSVVEDKILNPEKLKQGGAQGGQSGMSQ</sequence>
<proteinExistence type="inferred from homology"/>
<name>PRSA_STAAS</name>
<keyword id="KW-1003">Cell membrane</keyword>
<keyword id="KW-0413">Isomerase</keyword>
<keyword id="KW-0449">Lipoprotein</keyword>
<keyword id="KW-0472">Membrane</keyword>
<keyword id="KW-0564">Palmitate</keyword>
<keyword id="KW-0697">Rotamase</keyword>
<keyword id="KW-0732">Signal</keyword>
<gene>
    <name evidence="1" type="primary">prsA</name>
    <name type="ordered locus">SAS1762</name>
</gene>
<organism>
    <name type="scientific">Staphylococcus aureus (strain MSSA476)</name>
    <dbReference type="NCBI Taxonomy" id="282459"/>
    <lineage>
        <taxon>Bacteria</taxon>
        <taxon>Bacillati</taxon>
        <taxon>Bacillota</taxon>
        <taxon>Bacilli</taxon>
        <taxon>Bacillales</taxon>
        <taxon>Staphylococcaceae</taxon>
        <taxon>Staphylococcus</taxon>
    </lineage>
</organism>
<protein>
    <recommendedName>
        <fullName evidence="1">Foldase protein PrsA</fullName>
        <ecNumber evidence="1">5.2.1.8</ecNumber>
    </recommendedName>
</protein>
<accession>Q6G894</accession>